<sequence length="443" mass="48893">MSTSDSIVSSQTKQSSWRKSDTTWTLGLFGTAIGAGVLFFPIRAGFGGLIPILLMLVLAYPIAFYCHRALARLCLSGSNPSGNITETVEEHFGKTGGVVITFLYFFAICPLLWIYGVTITNTFMTFWENQLGFAPLNRGFVALFLLLLMAFVIWFGKDLMVKVMSYLVWPFIASLVLISLSLIPYWNSAVIDQVDLGSLSLTGHDGILITVWLGISIMVFSFNFSPIVSSFVVSKREEYEKDFGRDFTERKCSQIISRASMLMVAVVMFFAFSCLFTLSPANMAEAKAQNIPVLSYLANHFASMTGTKTTFAITLEYAASIIALVAIFKSFFGHYLGTLEGLNGLILKFGYKGDKTKVSLGKLNTLSMIFIMGSTWVVAYANPNILDLIEAMGAPIIASLLCLLPMYAIRKAPSLAKYRGRLDNVFVTVIGLLTILNIVYKLF</sequence>
<reference key="1">
    <citation type="journal article" date="2002" name="Nucleic Acids Res.">
        <title>Genome sequence of Shigella flexneri 2a: insights into pathogenicity through comparison with genomes of Escherichia coli K12 and O157.</title>
        <authorList>
            <person name="Jin Q."/>
            <person name="Yuan Z."/>
            <person name="Xu J."/>
            <person name="Wang Y."/>
            <person name="Shen Y."/>
            <person name="Lu W."/>
            <person name="Wang J."/>
            <person name="Liu H."/>
            <person name="Yang J."/>
            <person name="Yang F."/>
            <person name="Zhang X."/>
            <person name="Zhang J."/>
            <person name="Yang G."/>
            <person name="Wu H."/>
            <person name="Qu D."/>
            <person name="Dong J."/>
            <person name="Sun L."/>
            <person name="Xue Y."/>
            <person name="Zhao A."/>
            <person name="Gao Y."/>
            <person name="Zhu J."/>
            <person name="Kan B."/>
            <person name="Ding K."/>
            <person name="Chen S."/>
            <person name="Cheng H."/>
            <person name="Yao Z."/>
            <person name="He B."/>
            <person name="Chen R."/>
            <person name="Ma D."/>
            <person name="Qiang B."/>
            <person name="Wen Y."/>
            <person name="Hou Y."/>
            <person name="Yu J."/>
        </authorList>
    </citation>
    <scope>NUCLEOTIDE SEQUENCE [LARGE SCALE GENOMIC DNA]</scope>
    <source>
        <strain>301 / Serotype 2a</strain>
    </source>
</reference>
<reference key="2">
    <citation type="journal article" date="2003" name="Infect. Immun.">
        <title>Complete genome sequence and comparative genomics of Shigella flexneri serotype 2a strain 2457T.</title>
        <authorList>
            <person name="Wei J."/>
            <person name="Goldberg M.B."/>
            <person name="Burland V."/>
            <person name="Venkatesan M.M."/>
            <person name="Deng W."/>
            <person name="Fournier G."/>
            <person name="Mayhew G.F."/>
            <person name="Plunkett G. III"/>
            <person name="Rose D.J."/>
            <person name="Darling A."/>
            <person name="Mau B."/>
            <person name="Perna N.T."/>
            <person name="Payne S.M."/>
            <person name="Runyen-Janecky L.J."/>
            <person name="Zhou S."/>
            <person name="Schwartz D.C."/>
            <person name="Blattner F.R."/>
        </authorList>
    </citation>
    <scope>NUCLEOTIDE SEQUENCE [LARGE SCALE GENOMIC DNA]</scope>
    <source>
        <strain>ATCC 700930 / 2457T / Serotype 2a</strain>
    </source>
</reference>
<evidence type="ECO:0000255" key="1">
    <source>
        <dbReference type="HAMAP-Rule" id="MF_01583"/>
    </source>
</evidence>
<dbReference type="EMBL" id="AE005674">
    <property type="protein sequence ID" value="AAN44627.1"/>
    <property type="molecule type" value="Genomic_DNA"/>
</dbReference>
<dbReference type="EMBL" id="AE014073">
    <property type="protein sequence ID" value="AAP18441.1"/>
    <property type="molecule type" value="Genomic_DNA"/>
</dbReference>
<dbReference type="RefSeq" id="NP_708920.1">
    <property type="nucleotide sequence ID" value="NC_004337.2"/>
</dbReference>
<dbReference type="RefSeq" id="WP_000107721.1">
    <property type="nucleotide sequence ID" value="NZ_WPGW01000077.1"/>
</dbReference>
<dbReference type="SMR" id="Q83Q28"/>
<dbReference type="STRING" id="198214.SF3156"/>
<dbReference type="PaxDb" id="198214-SF3156"/>
<dbReference type="GeneID" id="1027153"/>
<dbReference type="KEGG" id="sfl:SF3156"/>
<dbReference type="KEGG" id="sfx:S3368"/>
<dbReference type="PATRIC" id="fig|198214.7.peg.3746"/>
<dbReference type="HOGENOM" id="CLU_052043_1_1_6"/>
<dbReference type="Proteomes" id="UP000001006">
    <property type="component" value="Chromosome"/>
</dbReference>
<dbReference type="Proteomes" id="UP000002673">
    <property type="component" value="Chromosome"/>
</dbReference>
<dbReference type="GO" id="GO:0005886">
    <property type="term" value="C:plasma membrane"/>
    <property type="evidence" value="ECO:0007669"/>
    <property type="project" value="UniProtKB-SubCell"/>
</dbReference>
<dbReference type="GO" id="GO:0015194">
    <property type="term" value="F:L-serine transmembrane transporter activity"/>
    <property type="evidence" value="ECO:0007669"/>
    <property type="project" value="InterPro"/>
</dbReference>
<dbReference type="GO" id="GO:0015293">
    <property type="term" value="F:symporter activity"/>
    <property type="evidence" value="ECO:0007669"/>
    <property type="project" value="UniProtKB-UniRule"/>
</dbReference>
<dbReference type="GO" id="GO:0015565">
    <property type="term" value="F:threonine efflux transmembrane transporter activity"/>
    <property type="evidence" value="ECO:0007669"/>
    <property type="project" value="InterPro"/>
</dbReference>
<dbReference type="HAMAP" id="MF_01583">
    <property type="entry name" value="Thr_Ser_transp_TdcC"/>
    <property type="match status" value="1"/>
</dbReference>
<dbReference type="InterPro" id="IPR018227">
    <property type="entry name" value="Amino_acid_transport_2"/>
</dbReference>
<dbReference type="InterPro" id="IPR004694">
    <property type="entry name" value="Hydroxy_aa_transpt"/>
</dbReference>
<dbReference type="InterPro" id="IPR023726">
    <property type="entry name" value="Thr/Ser_transpt_TdcC"/>
</dbReference>
<dbReference type="NCBIfam" id="NF010152">
    <property type="entry name" value="PRK13629.1"/>
    <property type="match status" value="1"/>
</dbReference>
<dbReference type="NCBIfam" id="TIGR00814">
    <property type="entry name" value="stp"/>
    <property type="match status" value="1"/>
</dbReference>
<dbReference type="PANTHER" id="PTHR35334">
    <property type="entry name" value="SERINE TRANSPORTER"/>
    <property type="match status" value="1"/>
</dbReference>
<dbReference type="PANTHER" id="PTHR35334:SF1">
    <property type="entry name" value="THREONINE_SERINE TRANSPORTER TDCC"/>
    <property type="match status" value="1"/>
</dbReference>
<dbReference type="Pfam" id="PF03222">
    <property type="entry name" value="Trp_Tyr_perm"/>
    <property type="match status" value="1"/>
</dbReference>
<organism>
    <name type="scientific">Shigella flexneri</name>
    <dbReference type="NCBI Taxonomy" id="623"/>
    <lineage>
        <taxon>Bacteria</taxon>
        <taxon>Pseudomonadati</taxon>
        <taxon>Pseudomonadota</taxon>
        <taxon>Gammaproteobacteria</taxon>
        <taxon>Enterobacterales</taxon>
        <taxon>Enterobacteriaceae</taxon>
        <taxon>Shigella</taxon>
    </lineage>
</organism>
<comment type="function">
    <text evidence="1">Involved in the import of threonine and serine into the cell, with the concomitant import of a proton (symport system).</text>
</comment>
<comment type="catalytic activity">
    <reaction evidence="1">
        <text>L-threonine(in) + H(+)(in) = L-threonine(out) + H(+)(out)</text>
        <dbReference type="Rhea" id="RHEA:28883"/>
        <dbReference type="ChEBI" id="CHEBI:15378"/>
        <dbReference type="ChEBI" id="CHEBI:57926"/>
    </reaction>
    <physiologicalReaction direction="right-to-left" evidence="1">
        <dbReference type="Rhea" id="RHEA:28885"/>
    </physiologicalReaction>
</comment>
<comment type="catalytic activity">
    <reaction evidence="1">
        <text>L-serine(in) + H(+)(in) = L-serine(out) + H(+)(out)</text>
        <dbReference type="Rhea" id="RHEA:28887"/>
        <dbReference type="ChEBI" id="CHEBI:15378"/>
        <dbReference type="ChEBI" id="CHEBI:33384"/>
    </reaction>
    <physiologicalReaction direction="right-to-left" evidence="1">
        <dbReference type="Rhea" id="RHEA:28889"/>
    </physiologicalReaction>
</comment>
<comment type="subcellular location">
    <subcellularLocation>
        <location evidence="1">Cell inner membrane</location>
        <topology evidence="1">Multi-pass membrane protein</topology>
    </subcellularLocation>
</comment>
<comment type="similarity">
    <text evidence="1">Belongs to the amino acid/polyamine transporter 2 family. SdaC/TdcC subfamily.</text>
</comment>
<keyword id="KW-0029">Amino-acid transport</keyword>
<keyword id="KW-0997">Cell inner membrane</keyword>
<keyword id="KW-1003">Cell membrane</keyword>
<keyword id="KW-0472">Membrane</keyword>
<keyword id="KW-1185">Reference proteome</keyword>
<keyword id="KW-0769">Symport</keyword>
<keyword id="KW-0812">Transmembrane</keyword>
<keyword id="KW-1133">Transmembrane helix</keyword>
<keyword id="KW-0813">Transport</keyword>
<feature type="chain" id="PRO_0000309173" description="Threonine/serine transporter TdcC">
    <location>
        <begin position="1"/>
        <end position="443"/>
    </location>
</feature>
<feature type="transmembrane region" description="Helical" evidence="1">
    <location>
        <begin position="22"/>
        <end position="42"/>
    </location>
</feature>
<feature type="transmembrane region" description="Helical" evidence="1">
    <location>
        <begin position="44"/>
        <end position="64"/>
    </location>
</feature>
<feature type="transmembrane region" description="Helical" evidence="1">
    <location>
        <begin position="97"/>
        <end position="117"/>
    </location>
</feature>
<feature type="transmembrane region" description="Helical" evidence="1">
    <location>
        <begin position="140"/>
        <end position="160"/>
    </location>
</feature>
<feature type="transmembrane region" description="Helical" evidence="1">
    <location>
        <begin position="163"/>
        <end position="183"/>
    </location>
</feature>
<feature type="transmembrane region" description="Helical" evidence="1">
    <location>
        <begin position="207"/>
        <end position="227"/>
    </location>
</feature>
<feature type="transmembrane region" description="Helical" evidence="1">
    <location>
        <begin position="261"/>
        <end position="281"/>
    </location>
</feature>
<feature type="transmembrane region" description="Helical" evidence="1">
    <location>
        <begin position="311"/>
        <end position="331"/>
    </location>
</feature>
<feature type="transmembrane region" description="Helical" evidence="1">
    <location>
        <begin position="366"/>
        <end position="386"/>
    </location>
</feature>
<feature type="transmembrane region" description="Helical" evidence="1">
    <location>
        <begin position="389"/>
        <end position="409"/>
    </location>
</feature>
<feature type="transmembrane region" description="Helical" evidence="1">
    <location>
        <begin position="423"/>
        <end position="443"/>
    </location>
</feature>
<protein>
    <recommendedName>
        <fullName evidence="1">Threonine/serine transporter TdcC</fullName>
    </recommendedName>
    <alternativeName>
        <fullName evidence="1">H(+)/threonine-serine symporter</fullName>
    </alternativeName>
</protein>
<name>TDCC_SHIFL</name>
<accession>Q83Q28</accession>
<accession>Q7BZT4</accession>
<proteinExistence type="inferred from homology"/>
<gene>
    <name evidence="1" type="primary">tdcC</name>
    <name type="ordered locus">SF3156</name>
    <name type="ordered locus">S3368</name>
</gene>